<protein>
    <recommendedName>
        <fullName evidence="2">Formamidopyrimidine-DNA glycosylase</fullName>
        <shortName evidence="2">Fapy-DNA glycosylase</shortName>
        <ecNumber evidence="2">3.2.2.23</ecNumber>
    </recommendedName>
    <alternativeName>
        <fullName evidence="2">DNA-(apurinic or apyrimidinic site) lyase MutM</fullName>
        <shortName evidence="2">AP lyase MutM</shortName>
        <ecNumber evidence="2">4.2.99.18</ecNumber>
    </alternativeName>
</protein>
<dbReference type="EC" id="3.2.2.23" evidence="2"/>
<dbReference type="EC" id="4.2.99.18" evidence="2"/>
<dbReference type="EMBL" id="CP000082">
    <property type="protein sequence ID" value="AAZ18211.1"/>
    <property type="molecule type" value="Genomic_DNA"/>
</dbReference>
<dbReference type="RefSeq" id="WP_011279649.1">
    <property type="nucleotide sequence ID" value="NC_007204.1"/>
</dbReference>
<dbReference type="SMR" id="Q4FUU7"/>
<dbReference type="STRING" id="259536.Psyc_0342"/>
<dbReference type="KEGG" id="par:Psyc_0342"/>
<dbReference type="eggNOG" id="COG0266">
    <property type="taxonomic scope" value="Bacteria"/>
</dbReference>
<dbReference type="HOGENOM" id="CLU_038423_1_0_6"/>
<dbReference type="OrthoDB" id="9800855at2"/>
<dbReference type="Proteomes" id="UP000000546">
    <property type="component" value="Chromosome"/>
</dbReference>
<dbReference type="GO" id="GO:0034039">
    <property type="term" value="F:8-oxo-7,8-dihydroguanine DNA N-glycosylase activity"/>
    <property type="evidence" value="ECO:0007669"/>
    <property type="project" value="TreeGrafter"/>
</dbReference>
<dbReference type="GO" id="GO:0140078">
    <property type="term" value="F:class I DNA-(apurinic or apyrimidinic site) endonuclease activity"/>
    <property type="evidence" value="ECO:0007669"/>
    <property type="project" value="UniProtKB-EC"/>
</dbReference>
<dbReference type="GO" id="GO:0003684">
    <property type="term" value="F:damaged DNA binding"/>
    <property type="evidence" value="ECO:0007669"/>
    <property type="project" value="InterPro"/>
</dbReference>
<dbReference type="GO" id="GO:0008270">
    <property type="term" value="F:zinc ion binding"/>
    <property type="evidence" value="ECO:0007669"/>
    <property type="project" value="UniProtKB-UniRule"/>
</dbReference>
<dbReference type="GO" id="GO:0006284">
    <property type="term" value="P:base-excision repair"/>
    <property type="evidence" value="ECO:0007669"/>
    <property type="project" value="InterPro"/>
</dbReference>
<dbReference type="CDD" id="cd08966">
    <property type="entry name" value="EcFpg-like_N"/>
    <property type="match status" value="1"/>
</dbReference>
<dbReference type="FunFam" id="1.10.8.50:FF:000003">
    <property type="entry name" value="Formamidopyrimidine-DNA glycosylase"/>
    <property type="match status" value="1"/>
</dbReference>
<dbReference type="Gene3D" id="1.10.8.50">
    <property type="match status" value="1"/>
</dbReference>
<dbReference type="Gene3D" id="3.20.190.10">
    <property type="entry name" value="MutM-like, N-terminal"/>
    <property type="match status" value="1"/>
</dbReference>
<dbReference type="HAMAP" id="MF_00103">
    <property type="entry name" value="Fapy_DNA_glycosyl"/>
    <property type="match status" value="1"/>
</dbReference>
<dbReference type="InterPro" id="IPR015886">
    <property type="entry name" value="DNA_glyclase/AP_lyase_DNA-bd"/>
</dbReference>
<dbReference type="InterPro" id="IPR020629">
    <property type="entry name" value="Formamido-pyr_DNA_Glyclase"/>
</dbReference>
<dbReference type="InterPro" id="IPR012319">
    <property type="entry name" value="FPG_cat"/>
</dbReference>
<dbReference type="InterPro" id="IPR035937">
    <property type="entry name" value="MutM-like_N-ter"/>
</dbReference>
<dbReference type="InterPro" id="IPR010979">
    <property type="entry name" value="Ribosomal_uS13-like_H2TH"/>
</dbReference>
<dbReference type="InterPro" id="IPR000214">
    <property type="entry name" value="Znf_DNA_glyclase/AP_lyase"/>
</dbReference>
<dbReference type="InterPro" id="IPR010663">
    <property type="entry name" value="Znf_FPG/IleRS"/>
</dbReference>
<dbReference type="NCBIfam" id="NF002211">
    <property type="entry name" value="PRK01103.1"/>
    <property type="match status" value="1"/>
</dbReference>
<dbReference type="PANTHER" id="PTHR22993">
    <property type="entry name" value="FORMAMIDOPYRIMIDINE-DNA GLYCOSYLASE"/>
    <property type="match status" value="1"/>
</dbReference>
<dbReference type="PANTHER" id="PTHR22993:SF9">
    <property type="entry name" value="FORMAMIDOPYRIMIDINE-DNA GLYCOSYLASE"/>
    <property type="match status" value="1"/>
</dbReference>
<dbReference type="Pfam" id="PF01149">
    <property type="entry name" value="Fapy_DNA_glyco"/>
    <property type="match status" value="1"/>
</dbReference>
<dbReference type="Pfam" id="PF06831">
    <property type="entry name" value="H2TH"/>
    <property type="match status" value="1"/>
</dbReference>
<dbReference type="Pfam" id="PF06827">
    <property type="entry name" value="zf-FPG_IleRS"/>
    <property type="match status" value="1"/>
</dbReference>
<dbReference type="SMART" id="SM00898">
    <property type="entry name" value="Fapy_DNA_glyco"/>
    <property type="match status" value="1"/>
</dbReference>
<dbReference type="SMART" id="SM01232">
    <property type="entry name" value="H2TH"/>
    <property type="match status" value="1"/>
</dbReference>
<dbReference type="SUPFAM" id="SSF57716">
    <property type="entry name" value="Glucocorticoid receptor-like (DNA-binding domain)"/>
    <property type="match status" value="1"/>
</dbReference>
<dbReference type="SUPFAM" id="SSF81624">
    <property type="entry name" value="N-terminal domain of MutM-like DNA repair proteins"/>
    <property type="match status" value="1"/>
</dbReference>
<dbReference type="SUPFAM" id="SSF46946">
    <property type="entry name" value="S13-like H2TH domain"/>
    <property type="match status" value="1"/>
</dbReference>
<dbReference type="PROSITE" id="PS51068">
    <property type="entry name" value="FPG_CAT"/>
    <property type="match status" value="1"/>
</dbReference>
<dbReference type="PROSITE" id="PS51066">
    <property type="entry name" value="ZF_FPG_2"/>
    <property type="match status" value="1"/>
</dbReference>
<comment type="function">
    <text evidence="2">Involved in base excision repair of DNA damaged by oxidation or by mutagenic agents. Acts as a DNA glycosylase that recognizes and removes damaged bases. Has a preference for oxidized purines, such as 7,8-dihydro-8-oxoguanine (8-oxoG). Has AP (apurinic/apyrimidinic) lyase activity and introduces nicks in the DNA strand. Cleaves the DNA backbone by beta-delta elimination to generate a single-strand break at the site of the removed base with both 3'- and 5'-phosphates.</text>
</comment>
<comment type="catalytic activity">
    <reaction evidence="2">
        <text>Hydrolysis of DNA containing ring-opened 7-methylguanine residues, releasing 2,6-diamino-4-hydroxy-5-(N-methyl)formamidopyrimidine.</text>
        <dbReference type="EC" id="3.2.2.23"/>
    </reaction>
</comment>
<comment type="catalytic activity">
    <reaction evidence="2">
        <text>2'-deoxyribonucleotide-(2'-deoxyribose 5'-phosphate)-2'-deoxyribonucleotide-DNA = a 3'-end 2'-deoxyribonucleotide-(2,3-dehydro-2,3-deoxyribose 5'-phosphate)-DNA + a 5'-end 5'-phospho-2'-deoxyribonucleoside-DNA + H(+)</text>
        <dbReference type="Rhea" id="RHEA:66592"/>
        <dbReference type="Rhea" id="RHEA-COMP:13180"/>
        <dbReference type="Rhea" id="RHEA-COMP:16897"/>
        <dbReference type="Rhea" id="RHEA-COMP:17067"/>
        <dbReference type="ChEBI" id="CHEBI:15378"/>
        <dbReference type="ChEBI" id="CHEBI:136412"/>
        <dbReference type="ChEBI" id="CHEBI:157695"/>
        <dbReference type="ChEBI" id="CHEBI:167181"/>
        <dbReference type="EC" id="4.2.99.18"/>
    </reaction>
</comment>
<comment type="cofactor">
    <cofactor evidence="2">
        <name>Zn(2+)</name>
        <dbReference type="ChEBI" id="CHEBI:29105"/>
    </cofactor>
    <text evidence="2">Binds 1 zinc ion per subunit.</text>
</comment>
<comment type="subunit">
    <text evidence="2">Monomer.</text>
</comment>
<comment type="similarity">
    <text evidence="2">Belongs to the FPG family.</text>
</comment>
<organism>
    <name type="scientific">Psychrobacter arcticus (strain DSM 17307 / VKM B-2377 / 273-4)</name>
    <dbReference type="NCBI Taxonomy" id="259536"/>
    <lineage>
        <taxon>Bacteria</taxon>
        <taxon>Pseudomonadati</taxon>
        <taxon>Pseudomonadota</taxon>
        <taxon>Gammaproteobacteria</taxon>
        <taxon>Moraxellales</taxon>
        <taxon>Moraxellaceae</taxon>
        <taxon>Psychrobacter</taxon>
    </lineage>
</organism>
<feature type="initiator methionine" description="Removed" evidence="1">
    <location>
        <position position="1"/>
    </location>
</feature>
<feature type="chain" id="PRO_0000228462" description="Formamidopyrimidine-DNA glycosylase">
    <location>
        <begin position="2"/>
        <end position="309"/>
    </location>
</feature>
<feature type="zinc finger region" description="FPG-type" evidence="2">
    <location>
        <begin position="271"/>
        <end position="305"/>
    </location>
</feature>
<feature type="active site" description="Schiff-base intermediate with DNA" evidence="2">
    <location>
        <position position="2"/>
    </location>
</feature>
<feature type="active site" description="Proton donor" evidence="2">
    <location>
        <position position="3"/>
    </location>
</feature>
<feature type="active site" description="Proton donor; for beta-elimination activity" evidence="2">
    <location>
        <position position="56"/>
    </location>
</feature>
<feature type="active site" description="Proton donor; for delta-elimination activity" evidence="2">
    <location>
        <position position="295"/>
    </location>
</feature>
<feature type="binding site" evidence="2">
    <location>
        <position position="106"/>
    </location>
    <ligand>
        <name>DNA</name>
        <dbReference type="ChEBI" id="CHEBI:16991"/>
    </ligand>
</feature>
<feature type="binding site" evidence="2">
    <location>
        <position position="129"/>
    </location>
    <ligand>
        <name>DNA</name>
        <dbReference type="ChEBI" id="CHEBI:16991"/>
    </ligand>
</feature>
<evidence type="ECO:0000250" key="1"/>
<evidence type="ECO:0000255" key="2">
    <source>
        <dbReference type="HAMAP-Rule" id="MF_00103"/>
    </source>
</evidence>
<sequence>MPELPEVETTKTSLAPLLGQKVTNVQVFQPKLRWSIPDNLADLVDYTLDSVERRAKYLILNFIPLADDGISSTVQPRNLQPRQLLVHLGMSGSLQQHNHASDKRKHDHLIMSFIGADSTQTQLHYYDPRRFGSILWLEEYGDKLLNHLGPEPLSDAFTADYLYHLIQRSRQSIQTQNSKSIKKQPIKRAIKSVIMEQQAVVGVGNIYATESLYLSGIHPATPANEVSYAQIVILVAHIKTILQKAIKLGGSTLRDFTVADGQTGYFQQTLNVYGRQGNACPHCESTLENIKLNGRASVYCPLCQPIISM</sequence>
<gene>
    <name evidence="2" type="primary">mutM</name>
    <name evidence="2" type="synonym">fpg</name>
    <name type="ordered locus">Psyc_0342</name>
</gene>
<proteinExistence type="inferred from homology"/>
<accession>Q4FUU7</accession>
<name>FPG_PSYA2</name>
<reference key="1">
    <citation type="journal article" date="2010" name="Appl. Environ. Microbiol.">
        <title>The genome sequence of Psychrobacter arcticus 273-4, a psychroactive Siberian permafrost bacterium, reveals mechanisms for adaptation to low-temperature growth.</title>
        <authorList>
            <person name="Ayala-del-Rio H.L."/>
            <person name="Chain P.S."/>
            <person name="Grzymski J.J."/>
            <person name="Ponder M.A."/>
            <person name="Ivanova N."/>
            <person name="Bergholz P.W."/>
            <person name="Di Bartolo G."/>
            <person name="Hauser L."/>
            <person name="Land M."/>
            <person name="Bakermans C."/>
            <person name="Rodrigues D."/>
            <person name="Klappenbach J."/>
            <person name="Zarka D."/>
            <person name="Larimer F."/>
            <person name="Richardson P."/>
            <person name="Murray A."/>
            <person name="Thomashow M."/>
            <person name="Tiedje J.M."/>
        </authorList>
    </citation>
    <scope>NUCLEOTIDE SEQUENCE [LARGE SCALE GENOMIC DNA]</scope>
    <source>
        <strain>DSM 17307 / VKM B-2377 / 273-4</strain>
    </source>
</reference>
<keyword id="KW-0227">DNA damage</keyword>
<keyword id="KW-0234">DNA repair</keyword>
<keyword id="KW-0238">DNA-binding</keyword>
<keyword id="KW-0326">Glycosidase</keyword>
<keyword id="KW-0378">Hydrolase</keyword>
<keyword id="KW-0456">Lyase</keyword>
<keyword id="KW-0479">Metal-binding</keyword>
<keyword id="KW-0511">Multifunctional enzyme</keyword>
<keyword id="KW-1185">Reference proteome</keyword>
<keyword id="KW-0862">Zinc</keyword>
<keyword id="KW-0863">Zinc-finger</keyword>